<protein>
    <recommendedName>
        <fullName evidence="1">Serine hydroxymethyltransferase</fullName>
        <shortName evidence="1">SHMT</shortName>
        <shortName evidence="1">Serine methylase</shortName>
        <ecNumber evidence="1">2.1.2.1</ecNumber>
    </recommendedName>
</protein>
<name>GLYA_NEIMF</name>
<feature type="chain" id="PRO_0000113624" description="Serine hydroxymethyltransferase">
    <location>
        <begin position="1"/>
        <end position="416"/>
    </location>
</feature>
<feature type="binding site" evidence="1">
    <location>
        <position position="121"/>
    </location>
    <ligand>
        <name>(6S)-5,6,7,8-tetrahydrofolate</name>
        <dbReference type="ChEBI" id="CHEBI:57453"/>
    </ligand>
</feature>
<feature type="binding site" evidence="1">
    <location>
        <begin position="125"/>
        <end position="127"/>
    </location>
    <ligand>
        <name>(6S)-5,6,7,8-tetrahydrofolate</name>
        <dbReference type="ChEBI" id="CHEBI:57453"/>
    </ligand>
</feature>
<feature type="site" description="Plays an important role in substrate specificity" evidence="1">
    <location>
        <position position="228"/>
    </location>
</feature>
<feature type="modified residue" description="N6-(pyridoxal phosphate)lysine" evidence="1">
    <location>
        <position position="229"/>
    </location>
</feature>
<sequence>MFSKSVTLAQYDPDLAAAIAQEDQRQQDHVELIASENYVSCAVMEAQGSQLTNKYAEGYPGKRYYGGCEYVDIVEQLAIDRVKKLFGAQYANVQPHSGSQANQAVYASVLKPGDTILGMSLAHGGHLTHGASVNISGKLYNAVTYGLDENEVLDYAEVERLALEHKPKMIVAGASAYALQIDWAKFREIADKVGAYLFVDMAHYAGLIAGGEYPNPVPFCDFVTTTTHKTLRGPRGGVILCRDNTHEKALNSSIFPSLQGGPLMHVIAAKAVAFKEALQPEFKQYAKQVKINAAAMAEELVKRGLRIVSGRTESHVFLVDLQPMKITGKAAEAALGKAHITVNKNAIPNDPEKPFVTSGIRIGSAAMTTRGFNEADARVLANLVADVLSNPEDEANLENVRKQITALCDKYPVYGA</sequence>
<comment type="function">
    <text evidence="1">Catalyzes the reversible interconversion of serine and glycine with tetrahydrofolate (THF) serving as the one-carbon carrier. This reaction serves as the major source of one-carbon groups required for the biosynthesis of purines, thymidylate, methionine, and other important biomolecules. Also exhibits THF-independent aldolase activity toward beta-hydroxyamino acids, producing glycine and aldehydes, via a retro-aldol mechanism.</text>
</comment>
<comment type="catalytic activity">
    <reaction evidence="1">
        <text>(6R)-5,10-methylene-5,6,7,8-tetrahydrofolate + glycine + H2O = (6S)-5,6,7,8-tetrahydrofolate + L-serine</text>
        <dbReference type="Rhea" id="RHEA:15481"/>
        <dbReference type="ChEBI" id="CHEBI:15377"/>
        <dbReference type="ChEBI" id="CHEBI:15636"/>
        <dbReference type="ChEBI" id="CHEBI:33384"/>
        <dbReference type="ChEBI" id="CHEBI:57305"/>
        <dbReference type="ChEBI" id="CHEBI:57453"/>
        <dbReference type="EC" id="2.1.2.1"/>
    </reaction>
</comment>
<comment type="cofactor">
    <cofactor evidence="1">
        <name>pyridoxal 5'-phosphate</name>
        <dbReference type="ChEBI" id="CHEBI:597326"/>
    </cofactor>
</comment>
<comment type="pathway">
    <text evidence="1">One-carbon metabolism; tetrahydrofolate interconversion.</text>
</comment>
<comment type="pathway">
    <text evidence="1">Amino-acid biosynthesis; glycine biosynthesis; glycine from L-serine: step 1/1.</text>
</comment>
<comment type="subunit">
    <text evidence="1">Homodimer.</text>
</comment>
<comment type="subcellular location">
    <subcellularLocation>
        <location evidence="1">Cytoplasm</location>
    </subcellularLocation>
</comment>
<comment type="similarity">
    <text evidence="1">Belongs to the SHMT family.</text>
</comment>
<accession>Q9XAZ1</accession>
<accession>A1KTU2</accession>
<evidence type="ECO:0000255" key="1">
    <source>
        <dbReference type="HAMAP-Rule" id="MF_00051"/>
    </source>
</evidence>
<keyword id="KW-0028">Amino-acid biosynthesis</keyword>
<keyword id="KW-0963">Cytoplasm</keyword>
<keyword id="KW-0554">One-carbon metabolism</keyword>
<keyword id="KW-0663">Pyridoxal phosphate</keyword>
<keyword id="KW-0808">Transferase</keyword>
<dbReference type="EC" id="2.1.2.1" evidence="1"/>
<dbReference type="EMBL" id="AJ242842">
    <property type="protein sequence ID" value="CAB44976.1"/>
    <property type="molecule type" value="Genomic_DNA"/>
</dbReference>
<dbReference type="EMBL" id="AM421808">
    <property type="protein sequence ID" value="CAM10282.1"/>
    <property type="molecule type" value="Genomic_DNA"/>
</dbReference>
<dbReference type="RefSeq" id="WP_002213664.1">
    <property type="nucleotide sequence ID" value="NC_008767.1"/>
</dbReference>
<dbReference type="SMR" id="Q9XAZ1"/>
<dbReference type="KEGG" id="nmc:NMC1017"/>
<dbReference type="HOGENOM" id="CLU_022477_2_1_4"/>
<dbReference type="UniPathway" id="UPA00193"/>
<dbReference type="UniPathway" id="UPA00288">
    <property type="reaction ID" value="UER01023"/>
</dbReference>
<dbReference type="Proteomes" id="UP000002286">
    <property type="component" value="Chromosome"/>
</dbReference>
<dbReference type="GO" id="GO:0005829">
    <property type="term" value="C:cytosol"/>
    <property type="evidence" value="ECO:0007669"/>
    <property type="project" value="TreeGrafter"/>
</dbReference>
<dbReference type="GO" id="GO:0004372">
    <property type="term" value="F:glycine hydroxymethyltransferase activity"/>
    <property type="evidence" value="ECO:0007669"/>
    <property type="project" value="UniProtKB-UniRule"/>
</dbReference>
<dbReference type="GO" id="GO:0030170">
    <property type="term" value="F:pyridoxal phosphate binding"/>
    <property type="evidence" value="ECO:0007669"/>
    <property type="project" value="UniProtKB-UniRule"/>
</dbReference>
<dbReference type="GO" id="GO:0019264">
    <property type="term" value="P:glycine biosynthetic process from serine"/>
    <property type="evidence" value="ECO:0007669"/>
    <property type="project" value="UniProtKB-UniRule"/>
</dbReference>
<dbReference type="GO" id="GO:0035999">
    <property type="term" value="P:tetrahydrofolate interconversion"/>
    <property type="evidence" value="ECO:0007669"/>
    <property type="project" value="UniProtKB-UniRule"/>
</dbReference>
<dbReference type="CDD" id="cd00378">
    <property type="entry name" value="SHMT"/>
    <property type="match status" value="1"/>
</dbReference>
<dbReference type="FunFam" id="3.40.640.10:FF:000001">
    <property type="entry name" value="Serine hydroxymethyltransferase"/>
    <property type="match status" value="1"/>
</dbReference>
<dbReference type="FunFam" id="3.90.1150.10:FF:000003">
    <property type="entry name" value="Serine hydroxymethyltransferase"/>
    <property type="match status" value="1"/>
</dbReference>
<dbReference type="Gene3D" id="3.90.1150.10">
    <property type="entry name" value="Aspartate Aminotransferase, domain 1"/>
    <property type="match status" value="1"/>
</dbReference>
<dbReference type="Gene3D" id="3.40.640.10">
    <property type="entry name" value="Type I PLP-dependent aspartate aminotransferase-like (Major domain)"/>
    <property type="match status" value="1"/>
</dbReference>
<dbReference type="HAMAP" id="MF_00051">
    <property type="entry name" value="SHMT"/>
    <property type="match status" value="1"/>
</dbReference>
<dbReference type="InterPro" id="IPR015424">
    <property type="entry name" value="PyrdxlP-dep_Trfase"/>
</dbReference>
<dbReference type="InterPro" id="IPR015421">
    <property type="entry name" value="PyrdxlP-dep_Trfase_major"/>
</dbReference>
<dbReference type="InterPro" id="IPR015422">
    <property type="entry name" value="PyrdxlP-dep_Trfase_small"/>
</dbReference>
<dbReference type="InterPro" id="IPR001085">
    <property type="entry name" value="Ser_HO-MeTrfase"/>
</dbReference>
<dbReference type="InterPro" id="IPR049943">
    <property type="entry name" value="Ser_HO-MeTrfase-like"/>
</dbReference>
<dbReference type="InterPro" id="IPR019798">
    <property type="entry name" value="Ser_HO-MeTrfase_PLP_BS"/>
</dbReference>
<dbReference type="InterPro" id="IPR039429">
    <property type="entry name" value="SHMT-like_dom"/>
</dbReference>
<dbReference type="NCBIfam" id="NF000586">
    <property type="entry name" value="PRK00011.1"/>
    <property type="match status" value="1"/>
</dbReference>
<dbReference type="PANTHER" id="PTHR11680">
    <property type="entry name" value="SERINE HYDROXYMETHYLTRANSFERASE"/>
    <property type="match status" value="1"/>
</dbReference>
<dbReference type="PANTHER" id="PTHR11680:SF50">
    <property type="entry name" value="SERINE HYDROXYMETHYLTRANSFERASE"/>
    <property type="match status" value="1"/>
</dbReference>
<dbReference type="Pfam" id="PF00464">
    <property type="entry name" value="SHMT"/>
    <property type="match status" value="1"/>
</dbReference>
<dbReference type="PIRSF" id="PIRSF000412">
    <property type="entry name" value="SHMT"/>
    <property type="match status" value="1"/>
</dbReference>
<dbReference type="SUPFAM" id="SSF53383">
    <property type="entry name" value="PLP-dependent transferases"/>
    <property type="match status" value="1"/>
</dbReference>
<dbReference type="PROSITE" id="PS00096">
    <property type="entry name" value="SHMT"/>
    <property type="match status" value="1"/>
</dbReference>
<organism>
    <name type="scientific">Neisseria meningitidis serogroup C / serotype 2a (strain ATCC 700532 / DSM 15464 / FAM18)</name>
    <dbReference type="NCBI Taxonomy" id="272831"/>
    <lineage>
        <taxon>Bacteria</taxon>
        <taxon>Pseudomonadati</taxon>
        <taxon>Pseudomonadota</taxon>
        <taxon>Betaproteobacteria</taxon>
        <taxon>Neisseriales</taxon>
        <taxon>Neisseriaceae</taxon>
        <taxon>Neisseria</taxon>
    </lineage>
</organism>
<proteinExistence type="inferred from homology"/>
<reference key="1">
    <citation type="journal article" date="1999" name="Mol. Microbiol.">
        <title>The opcA and (psi)opcB regions in Neisseria: genes, pseudogenes, deletions, insertion elements and DNA islands.</title>
        <authorList>
            <person name="Zhu P."/>
            <person name="Morelli G."/>
            <person name="Achtman M."/>
        </authorList>
    </citation>
    <scope>NUCLEOTIDE SEQUENCE [GENOMIC DNA]</scope>
</reference>
<reference key="2">
    <citation type="journal article" date="2007" name="PLoS Genet.">
        <title>Meningococcal genetic variation mechanisms viewed through comparative analysis of serogroup C strain FAM18.</title>
        <authorList>
            <person name="Bentley S.D."/>
            <person name="Vernikos G.S."/>
            <person name="Snyder L.A.S."/>
            <person name="Churcher C."/>
            <person name="Arrowsmith C."/>
            <person name="Chillingworth T."/>
            <person name="Cronin A."/>
            <person name="Davis P.H."/>
            <person name="Holroyd N.E."/>
            <person name="Jagels K."/>
            <person name="Maddison M."/>
            <person name="Moule S."/>
            <person name="Rabbinowitsch E."/>
            <person name="Sharp S."/>
            <person name="Unwin L."/>
            <person name="Whitehead S."/>
            <person name="Quail M.A."/>
            <person name="Achtman M."/>
            <person name="Barrell B.G."/>
            <person name="Saunders N.J."/>
            <person name="Parkhill J."/>
        </authorList>
    </citation>
    <scope>NUCLEOTIDE SEQUENCE [LARGE SCALE GENOMIC DNA]</scope>
    <source>
        <strain>ATCC 700532 / DSM 15464 / FAM18</strain>
    </source>
</reference>
<gene>
    <name evidence="1" type="primary">glyA</name>
    <name type="ordered locus">NMC1017</name>
</gene>